<comment type="subcellular location">
    <subcellularLocation>
        <location evidence="4">Cytoplasm</location>
    </subcellularLocation>
</comment>
<comment type="miscellaneous">
    <text evidence="4">Encoded by one of the numerous copies of NBPF genes clustered in the p36, p12 and q21 region of the chromosome 1.</text>
</comment>
<comment type="similarity">
    <text evidence="4">Belongs to the NBPF family.</text>
</comment>
<dbReference type="EMBL" id="AC242842">
    <property type="status" value="NOT_ANNOTATED_CDS"/>
    <property type="molecule type" value="Genomic_DNA"/>
</dbReference>
<dbReference type="EMBL" id="AC242843">
    <property type="status" value="NOT_ANNOTATED_CDS"/>
    <property type="molecule type" value="Genomic_DNA"/>
</dbReference>
<dbReference type="CCDS" id="CCDS86016.1"/>
<dbReference type="RefSeq" id="NP_001338294.1">
    <property type="nucleotide sequence ID" value="NM_001351365.2"/>
</dbReference>
<dbReference type="SMR" id="A0A087WUL8"/>
<dbReference type="FunCoup" id="A0A087WUL8">
    <property type="interactions" value="1"/>
</dbReference>
<dbReference type="STRING" id="9606.ENSP00000478752"/>
<dbReference type="GlyGen" id="A0A087WUL8">
    <property type="glycosylation" value="1 site"/>
</dbReference>
<dbReference type="iPTMnet" id="A0A087WUL8"/>
<dbReference type="PhosphoSitePlus" id="A0A087WUL8"/>
<dbReference type="BioMuta" id="NBPF19"/>
<dbReference type="jPOST" id="A0A087WUL8"/>
<dbReference type="MassIVE" id="A0A087WUL8"/>
<dbReference type="PaxDb" id="9606-ENSP00000478752"/>
<dbReference type="PeptideAtlas" id="A0A087WUL8"/>
<dbReference type="Ensembl" id="ENST00000651566.2">
    <property type="protein sequence ID" value="ENSP00000498781.1"/>
    <property type="gene ID" value="ENSG00000271383.9"/>
</dbReference>
<dbReference type="GeneID" id="101060226"/>
<dbReference type="MANE-Select" id="ENST00000651566.2">
    <property type="protein sequence ID" value="ENSP00000498781.1"/>
    <property type="RefSeq nucleotide sequence ID" value="NM_001351365.2"/>
    <property type="RefSeq protein sequence ID" value="NP_001338294.1"/>
</dbReference>
<dbReference type="UCSC" id="uc031uxc.2">
    <property type="organism name" value="human"/>
</dbReference>
<dbReference type="AGR" id="HGNC:31999"/>
<dbReference type="GeneCards" id="NBPF19"/>
<dbReference type="HGNC" id="HGNC:31999">
    <property type="gene designation" value="NBPF19"/>
</dbReference>
<dbReference type="HPA" id="ENSG00000271383">
    <property type="expression patterns" value="Low tissue specificity"/>
</dbReference>
<dbReference type="MIM" id="614006">
    <property type="type" value="gene"/>
</dbReference>
<dbReference type="neXtProt" id="NX_A0A087WUL8"/>
<dbReference type="OpenTargets" id="ENSG00000271383"/>
<dbReference type="VEuPathDB" id="HostDB:ENSG00000271383"/>
<dbReference type="eggNOG" id="ENOG502RU1I">
    <property type="taxonomic scope" value="Eukaryota"/>
</dbReference>
<dbReference type="GeneTree" id="ENSGT00420000029746"/>
<dbReference type="HOGENOM" id="CLU_224329_0_0_1"/>
<dbReference type="InParanoid" id="A0A087WUL8"/>
<dbReference type="PAN-GO" id="A0A087WUL8">
    <property type="GO annotations" value="0 GO annotations based on evolutionary models"/>
</dbReference>
<dbReference type="PathwayCommons" id="A0A087WUL8"/>
<dbReference type="ChiTaRS" id="NBPF19">
    <property type="organism name" value="human"/>
</dbReference>
<dbReference type="Pharos" id="A0A087WUL8">
    <property type="development level" value="Tdark"/>
</dbReference>
<dbReference type="Proteomes" id="UP000005640">
    <property type="component" value="Chromosome 1"/>
</dbReference>
<dbReference type="RNAct" id="A0A087WUL8">
    <property type="molecule type" value="protein"/>
</dbReference>
<dbReference type="Bgee" id="ENSG00000271383">
    <property type="expression patterns" value="Expressed in sural nerve and 100 other cell types or tissues"/>
</dbReference>
<dbReference type="ExpressionAtlas" id="A0A087WUL8">
    <property type="expression patterns" value="baseline and differential"/>
</dbReference>
<dbReference type="GO" id="GO:0005737">
    <property type="term" value="C:cytoplasm"/>
    <property type="evidence" value="ECO:0007669"/>
    <property type="project" value="UniProtKB-SubCell"/>
</dbReference>
<dbReference type="InterPro" id="IPR055306">
    <property type="entry name" value="NBPF"/>
</dbReference>
<dbReference type="InterPro" id="IPR010630">
    <property type="entry name" value="Olduvai_dom"/>
</dbReference>
<dbReference type="PANTHER" id="PTHR14199:SF35">
    <property type="entry name" value="NEUROBLASTOMA BREAKPOINT FAMILY MEMBER 1-RELATED"/>
    <property type="match status" value="1"/>
</dbReference>
<dbReference type="PANTHER" id="PTHR14199">
    <property type="entry name" value="NEUROBLASTOMA BREAKPOINT FAMILY MEMBER 6-LIKE PROTEIN"/>
    <property type="match status" value="1"/>
</dbReference>
<dbReference type="Pfam" id="PF06758">
    <property type="entry name" value="Olduvai"/>
    <property type="match status" value="45"/>
</dbReference>
<dbReference type="SMART" id="SM01148">
    <property type="entry name" value="DUF1220"/>
    <property type="match status" value="45"/>
</dbReference>
<dbReference type="PROSITE" id="PS51316">
    <property type="entry name" value="ODV"/>
    <property type="match status" value="45"/>
</dbReference>
<gene>
    <name evidence="5" type="primary">NBPF19</name>
</gene>
<sequence length="3843" mass="440408">MVVSAGPWSSEKAEMNILEINETLRPQLAEKKQQFRNLKEKCFLTQLAGFLANRQKKYKYEECKDLIKFMLRNERQFKEEKLAEQLKQAEELRQYKVLFHSQERELTQLREKLREGRDASRSLNEHLQALLTPDEPDKSQGQDLQEQLAEGCRLAQHLVQKLSPENDNDDDEDVQVEVAEKVQKSSAPREMQKAEEKEVPEDSLEECAITYSNSHGPYDSNQPHRKTKITFEEDKVDSTLIGSSSHVEWEDAVHIIPENESDDEEEEEKGPVSPRNLQESEEEEVPQESWDEGYSTLSIPPEMLASYQSYSSTFHSLEEQQVCMAVDIGRHRWDQVKKEDQEATGPRLSRELLDEKGPEVLQDSLDRCYSTPSGCLELTDSCQPYRSAFYVLEQQRVGLAIDMDEIEKYQEVEEDQDPSCPRLSRELLDEKEPEVLQDSLDRCYSIPSGYLELPDLGQPYSSAVYSLEEQYLGLALDVDRIKKDQEEEEDQDPPCPRLSRELVEVVEPEVLQDSLDRCYSTPSSCLEQPDSCQPYGSSFYALEEKHVGFSLDVGEIEKKGKGKKRRGRRSKKERRRGRKEGEEDQNPPCPRLSRELLDEKGPEVLQDSLDRCYSTPSGCLELTDSCQPYRSAFYILEQQCVGLAVDMDEIEKYQEVEEDQDPSCPRLSRELLDEKEPEVLQDSLDRCYSIPSGYLELPDLGQPYSSAVYSLEEQYLGLALDVDRIKKDQEEEEDQDPPCPRLSRELVEVVEPEVLQDSLDRCYSTPSSCLEQPDSCQPYGSSFYALEEKHVGFSLDVGEIEKKGKGKKRRGRRSKKERRRGRKEGEEDQNPPCPRLSRELLDEKGPEVLQDSLDRCYSTPSGCLELTDSCQPYRSAFYILEQQCVGLAIDMDEIEKYQEVEEDQDPSCPRLSRELLDEKEPEVLQDSLDRCYSIPSGYLELPDLGQPYSSAVYSLEEQYLGLALDVDRIKKDQEEEEDQDPPCPRLSRELVEVVEPEVLQDSLDRCYSTPSSCLEQPDSCQPYGSSFYALEEKHVGFSLDVGEIEKKGKGKKRRGRRSKKERRRGRKEGEEDQNPPCPRLSRELLDEKGPEVLQDSLDRCYSTPSGCLELTDSCQPYRSAFYILEQQCVGLAVDMDEIEKYQEVEEDQDPSCPRLSRELLDEKEPEVLQDSLDRCYSIPSGYLELPDLGQPYSSAVYSLEEQYLGLALDVDRIKKDQEEEEDQDPPCPRLSRELVEVVEPEVLQDSLDRCYSTPSSCLEQPDSCQPYGSSFYALEEKHVGFSLDVGEIEKKGKGKKRRGRRSKKERRRGRKEGEEDQNPPCPRLSRELLDEKGPEVLQDSLDRCYSTPSGCLELTDSCQPYRSAFYILEQQCVGLAVDMDEIEKYQEVEEDQDPSCPRLSRELLDEKEPEVLQDSLDRCYSIPSGYLELPDLGQPYSSAVYSLEEQYLGLALDVDRIKKDQEEEEDQDPPCPRLSRELVEVVEPEVLQDSLDRCYSTPSSCLEQPDSCQPYGSSFYALEEKHVGFSLDVGEIEKKGKGKKRRGRRSKKERRRGRKEGEEDQNPPCPRLSRELLDEKGPEVLQDSLDRCYSTPSGCLELTDSCQPYRSAFYILEQQCVGLAVDMDEIEKYQEVEEDQDPSCPRLSRELLDEKEPEVLQDSLDRCYSIPSGYLELPDLGQPYSSAVYSLEEQYLGLALDVDRIKKDQEEEEDQDPPCPRLSRELLEVVEPEVLQDSLDRCYSTPSSCLEQPDSCQPYGSSFYALEEKHVGFSLDVGEIEKKGKGKKRRGRRSKKERRRGRKEGEEDQNPPCPRLSRELLDEKGPEVLQDSLDRCYSTPSGCLELTDSCQPYRSAFYILEQQCVGLAVDMDEIEKYQEVEEDQDPSCPRLSRELLDEKEPEVLQDSLDRCYSTPSGYLELPDLGQPYSSAVYSLEEQYLGLALDVDRIKKDQEEEEDQGPPCPRLSRELLEVVEPEVLQDSLDRCYSTPSSCLEQPDSCQPYGSSFYALEEKHVGFSLDVGEIEKKGKGKKRRGRRSKKERRRGRKEGEEDQNPPCPRLSRELLDEKGPEVLQDSLDRCYSTPSGCLELTDSCQPYRSAFYILEQQCVGLAVDMDEIEKYQEVEEDQDPSCPRLSRELLDEKEPEVLQDSLDRCYSTPSGYLELPDLGQPYSSAVYSLEEQYLGLALDVDRIKKDQEEEEDQGPPCPRLSRELLEVVEPEVLQDSLDRCYSTPSSCLEQPDSCQPYGSSFYALEEKHVGFSLDVGEIEKKGKGKKRRGRRSKKERRRGRKEGEEDQNPPCPRLSRELLDEKGPEVLQDSLDRCYSTPSGCLELTDSCQPYRSAFYILEQQCVGLAVDMDEIEKYQEVEEDQDPSCPRLSRELLDEKEPEVLQDSLDRCYSTPSGYLELPDLGQPYSSAVYSLEEQYLGLALDVDRIKKDQEEEEDQGPPCPRLSRELLEVVEPEVLQDSLDRCYSTPSSCLEQPDSCQPYGSSFYALEEKHVGFSLDVGEIEKKGKGKKRRGRRSKKERRRGRKEGEEDQNPPCPRLSRELLDEKGPEVLQDSLDRCYSTPSGCLELTDSCQPYRSAFYILEQQCVGLAVDMDEIEKYQEVEEDQDPSCPRLSRELLDEKEPEVLQDSLDRCYSTPSGYLELPDLGQPYSSAVYSLEEQYLGLALDVDRIKKDQEEEEDQGPPCPRLSRELLEVVEPEVLQDSLDRCYSTPSSCLEQPDSCQPYGSSFYALEEKHVGFSLDVGEIEKKGKGKKRRGRRSKKERRRGRKEGEEDQNPPCPRLSRELLDEKGPEVLQDSLDRCYSTPSGCLELTDSCQPYRSAFYILEQQCVGLAVDMDEIEKYQEVEEDQDPSCPRLSRELLDEKEPEVLQDSLDRCYSTPSGYLELPDLGQPYSSAVYSLEEQYLGLALDVDRIKKDQEEEEDQGPPCPRLSRELLEVVEPEVLQDSLDRCYSTPSSCLEQPDSCQPYGSSFYALEEKHVGFSLDVGEIEKKGKGKKRRGRRSKKERRRGRKEGEEDQNPPCPRLSRELLDEKGPEVLQDSLDRCYSTPSGCLELTDSCQPYRSAFYILEQQCVGLAVDMDEIEKYQEVEEDQDPSCPRLSRELLAEKEPEVLQDPLDRCYSTPSGYLELPDLGQPYSSAVYSLEEQYLGLALDVDRIKKDQEEEEDQGPPCPRLSRELLEVVEPEVLQDSLDRCYSTPSSCLEQPDSCQPYGSSFYALEEKHVGFSLDVGEIEKKGKGKKRRGRRSKKERRRGRKEGEEDQNPPCPRLSRELLDEKGPEVLQDSLDRCYSTPSGCLELTDSCQPYRSAFYILEQQCVGLAVDMDEIEKYQEVEEDQDPSCPRLSRELLAEKEPEVLQDPLDRCYSTPSGYLELPDLGQPYSSAVYSLEEQYLGLALDVDRIKKDQEEEEDQGPPCPRLSRELLEVVEPEVLQDSLDRCYSTPSSCLEQPDSCQPYGSSFYALEEKHVGFSLDVGEIEKKGKGKKRRGRRSKKERRRGRKEGEEDQNPPCPRLSRELLDEKGPEVLQDSLDRCYSTPSGCLELTDSCQPYRSAFYILEQQCVGLAVDMDEIEKYQEVEEDQDPSCPRLSRELLAEKEPEVLQDPLDRCYSTPSGYLELPDLGQPYSSAVYSLEEQYLGLALDVDRIKKDQEEEEDQGPPCPRLSRELLEVVEPEVLQDSLDRCYSTPSSCLEQPDSCQPYGSSFYALEEKHVGFSLDVGEIEKKGKGKKRRGRRSKKERRRGRKEGEEDQNPPCPRLNSVLMEVEEPEVLQDSLDGCYSTPSMYFELPDSFQHYRSVFYSFEEEHISFALYLDNRFFTLTVTSLHLVFQMLVIFPQ</sequence>
<reference key="1">
    <citation type="journal article" date="2006" name="Nature">
        <title>The DNA sequence and biological annotation of human chromosome 1.</title>
        <authorList>
            <person name="Gregory S.G."/>
            <person name="Barlow K.F."/>
            <person name="McLay K.E."/>
            <person name="Kaul R."/>
            <person name="Swarbreck D."/>
            <person name="Dunham A."/>
            <person name="Scott C.E."/>
            <person name="Howe K.L."/>
            <person name="Woodfine K."/>
            <person name="Spencer C.C.A."/>
            <person name="Jones M.C."/>
            <person name="Gillson C."/>
            <person name="Searle S."/>
            <person name="Zhou Y."/>
            <person name="Kokocinski F."/>
            <person name="McDonald L."/>
            <person name="Evans R."/>
            <person name="Phillips K."/>
            <person name="Atkinson A."/>
            <person name="Cooper R."/>
            <person name="Jones C."/>
            <person name="Hall R.E."/>
            <person name="Andrews T.D."/>
            <person name="Lloyd C."/>
            <person name="Ainscough R."/>
            <person name="Almeida J.P."/>
            <person name="Ambrose K.D."/>
            <person name="Anderson F."/>
            <person name="Andrew R.W."/>
            <person name="Ashwell R.I.S."/>
            <person name="Aubin K."/>
            <person name="Babbage A.K."/>
            <person name="Bagguley C.L."/>
            <person name="Bailey J."/>
            <person name="Beasley H."/>
            <person name="Bethel G."/>
            <person name="Bird C.P."/>
            <person name="Bray-Allen S."/>
            <person name="Brown J.Y."/>
            <person name="Brown A.J."/>
            <person name="Buckley D."/>
            <person name="Burton J."/>
            <person name="Bye J."/>
            <person name="Carder C."/>
            <person name="Chapman J.C."/>
            <person name="Clark S.Y."/>
            <person name="Clarke G."/>
            <person name="Clee C."/>
            <person name="Cobley V."/>
            <person name="Collier R.E."/>
            <person name="Corby N."/>
            <person name="Coville G.J."/>
            <person name="Davies J."/>
            <person name="Deadman R."/>
            <person name="Dunn M."/>
            <person name="Earthrowl M."/>
            <person name="Ellington A.G."/>
            <person name="Errington H."/>
            <person name="Frankish A."/>
            <person name="Frankland J."/>
            <person name="French L."/>
            <person name="Garner P."/>
            <person name="Garnett J."/>
            <person name="Gay L."/>
            <person name="Ghori M.R.J."/>
            <person name="Gibson R."/>
            <person name="Gilby L.M."/>
            <person name="Gillett W."/>
            <person name="Glithero R.J."/>
            <person name="Grafham D.V."/>
            <person name="Griffiths C."/>
            <person name="Griffiths-Jones S."/>
            <person name="Grocock R."/>
            <person name="Hammond S."/>
            <person name="Harrison E.S.I."/>
            <person name="Hart E."/>
            <person name="Haugen E."/>
            <person name="Heath P.D."/>
            <person name="Holmes S."/>
            <person name="Holt K."/>
            <person name="Howden P.J."/>
            <person name="Hunt A.R."/>
            <person name="Hunt S.E."/>
            <person name="Hunter G."/>
            <person name="Isherwood J."/>
            <person name="James R."/>
            <person name="Johnson C."/>
            <person name="Johnson D."/>
            <person name="Joy A."/>
            <person name="Kay M."/>
            <person name="Kershaw J.K."/>
            <person name="Kibukawa M."/>
            <person name="Kimberley A.M."/>
            <person name="King A."/>
            <person name="Knights A.J."/>
            <person name="Lad H."/>
            <person name="Laird G."/>
            <person name="Lawlor S."/>
            <person name="Leongamornlert D.A."/>
            <person name="Lloyd D.M."/>
            <person name="Loveland J."/>
            <person name="Lovell J."/>
            <person name="Lush M.J."/>
            <person name="Lyne R."/>
            <person name="Martin S."/>
            <person name="Mashreghi-Mohammadi M."/>
            <person name="Matthews L."/>
            <person name="Matthews N.S.W."/>
            <person name="McLaren S."/>
            <person name="Milne S."/>
            <person name="Mistry S."/>
            <person name="Moore M.J.F."/>
            <person name="Nickerson T."/>
            <person name="O'Dell C.N."/>
            <person name="Oliver K."/>
            <person name="Palmeiri A."/>
            <person name="Palmer S.A."/>
            <person name="Parker A."/>
            <person name="Patel D."/>
            <person name="Pearce A.V."/>
            <person name="Peck A.I."/>
            <person name="Pelan S."/>
            <person name="Phelps K."/>
            <person name="Phillimore B.J."/>
            <person name="Plumb R."/>
            <person name="Rajan J."/>
            <person name="Raymond C."/>
            <person name="Rouse G."/>
            <person name="Saenphimmachak C."/>
            <person name="Sehra H.K."/>
            <person name="Sheridan E."/>
            <person name="Shownkeen R."/>
            <person name="Sims S."/>
            <person name="Skuce C.D."/>
            <person name="Smith M."/>
            <person name="Steward C."/>
            <person name="Subramanian S."/>
            <person name="Sycamore N."/>
            <person name="Tracey A."/>
            <person name="Tromans A."/>
            <person name="Van Helmond Z."/>
            <person name="Wall M."/>
            <person name="Wallis J.M."/>
            <person name="White S."/>
            <person name="Whitehead S.L."/>
            <person name="Wilkinson J.E."/>
            <person name="Willey D.L."/>
            <person name="Williams H."/>
            <person name="Wilming L."/>
            <person name="Wray P.W."/>
            <person name="Wu Z."/>
            <person name="Coulson A."/>
            <person name="Vaudin M."/>
            <person name="Sulston J.E."/>
            <person name="Durbin R.M."/>
            <person name="Hubbard T."/>
            <person name="Wooster R."/>
            <person name="Dunham I."/>
            <person name="Carter N.P."/>
            <person name="McVean G."/>
            <person name="Ross M.T."/>
            <person name="Harrow J."/>
            <person name="Olson M.V."/>
            <person name="Beck S."/>
            <person name="Rogers J."/>
            <person name="Bentley D.R."/>
        </authorList>
    </citation>
    <scope>NUCLEOTIDE SEQUENCE [LARGE SCALE GENOMIC DNA]</scope>
</reference>
<feature type="chain" id="PRO_0000435422" description="NBPF family member NBPF19">
    <location>
        <begin position="1"/>
        <end position="3843"/>
    </location>
</feature>
<feature type="domain" description="Olduvai 1" evidence="2">
    <location>
        <begin position="165"/>
        <end position="257"/>
    </location>
</feature>
<feature type="domain" description="Olduvai 2" evidence="2">
    <location>
        <begin position="258"/>
        <end position="329"/>
    </location>
</feature>
<feature type="domain" description="Olduvai 3" evidence="2">
    <location>
        <begin position="330"/>
        <end position="421"/>
    </location>
</feature>
<feature type="domain" description="Olduvai 4" evidence="2">
    <location>
        <begin position="424"/>
        <end position="479"/>
    </location>
</feature>
<feature type="domain" description="Olduvai 5" evidence="2">
    <location>
        <begin position="480"/>
        <end position="572"/>
    </location>
</feature>
<feature type="domain" description="Olduvai 6" evidence="2">
    <location>
        <begin position="573"/>
        <end position="665"/>
    </location>
</feature>
<feature type="domain" description="Olduvai 7" evidence="2">
    <location>
        <begin position="668"/>
        <end position="723"/>
    </location>
</feature>
<feature type="domain" description="Olduvai 8" evidence="2">
    <location>
        <begin position="724"/>
        <end position="816"/>
    </location>
</feature>
<feature type="domain" description="Olduvai 9" evidence="2">
    <location>
        <begin position="817"/>
        <end position="909"/>
    </location>
</feature>
<feature type="domain" description="Olduvai 10" evidence="2">
    <location>
        <begin position="912"/>
        <end position="967"/>
    </location>
</feature>
<feature type="domain" description="Olduvai 11" evidence="2">
    <location>
        <begin position="968"/>
        <end position="1060"/>
    </location>
</feature>
<feature type="domain" description="Olduvai 12" evidence="2">
    <location>
        <begin position="1061"/>
        <end position="1153"/>
    </location>
</feature>
<feature type="domain" description="Olduvai 13" evidence="2">
    <location>
        <begin position="1156"/>
        <end position="1211"/>
    </location>
</feature>
<feature type="domain" description="Olduvai 14" evidence="2">
    <location>
        <begin position="1212"/>
        <end position="1304"/>
    </location>
</feature>
<feature type="domain" description="Olduvai 15" evidence="2">
    <location>
        <begin position="1305"/>
        <end position="1397"/>
    </location>
</feature>
<feature type="domain" description="Olduvai 16" evidence="2">
    <location>
        <begin position="1400"/>
        <end position="1455"/>
    </location>
</feature>
<feature type="domain" description="Olduvai 17" evidence="2">
    <location>
        <begin position="1456"/>
        <end position="1548"/>
    </location>
</feature>
<feature type="domain" description="Olduvai 18" evidence="2">
    <location>
        <begin position="1549"/>
        <end position="1641"/>
    </location>
</feature>
<feature type="domain" description="Olduvai 19" evidence="2">
    <location>
        <begin position="1644"/>
        <end position="1699"/>
    </location>
</feature>
<feature type="domain" description="Olduvai 20" evidence="2">
    <location>
        <begin position="1700"/>
        <end position="1792"/>
    </location>
</feature>
<feature type="domain" description="Olduvai 21" evidence="2">
    <location>
        <begin position="1793"/>
        <end position="1885"/>
    </location>
</feature>
<feature type="domain" description="Olduvai 22" evidence="2">
    <location>
        <begin position="1888"/>
        <end position="1943"/>
    </location>
</feature>
<feature type="domain" description="Olduvai 23" evidence="2">
    <location>
        <begin position="1944"/>
        <end position="2036"/>
    </location>
</feature>
<feature type="domain" description="Olduvai 24" evidence="2">
    <location>
        <begin position="2037"/>
        <end position="2129"/>
    </location>
</feature>
<feature type="domain" description="Olduvai 25" evidence="2">
    <location>
        <begin position="2132"/>
        <end position="2187"/>
    </location>
</feature>
<feature type="domain" description="Olduvai 26" evidence="2">
    <location>
        <begin position="2188"/>
        <end position="2280"/>
    </location>
</feature>
<feature type="domain" description="Olduvai 27" evidence="2">
    <location>
        <begin position="2281"/>
        <end position="2373"/>
    </location>
</feature>
<feature type="domain" description="Olduvai 28" evidence="2">
    <location>
        <begin position="2376"/>
        <end position="2431"/>
    </location>
</feature>
<feature type="domain" description="Olduvai 29" evidence="2">
    <location>
        <begin position="2432"/>
        <end position="2524"/>
    </location>
</feature>
<feature type="domain" description="Olduvai 30" evidence="2">
    <location>
        <begin position="2525"/>
        <end position="2617"/>
    </location>
</feature>
<feature type="domain" description="Olduvai 31" evidence="2">
    <location>
        <begin position="2620"/>
        <end position="2675"/>
    </location>
</feature>
<feature type="domain" description="Olduvai 32" evidence="2">
    <location>
        <begin position="2676"/>
        <end position="2768"/>
    </location>
</feature>
<feature type="domain" description="Olduvai 33" evidence="2">
    <location>
        <begin position="2769"/>
        <end position="2861"/>
    </location>
</feature>
<feature type="domain" description="Olduvai 34" evidence="2">
    <location>
        <begin position="2864"/>
        <end position="2919"/>
    </location>
</feature>
<feature type="domain" description="Olduvai 35" evidence="2">
    <location>
        <begin position="2920"/>
        <end position="3012"/>
    </location>
</feature>
<feature type="domain" description="Olduvai 36" evidence="2">
    <location>
        <begin position="3013"/>
        <end position="3105"/>
    </location>
</feature>
<feature type="domain" description="Olduvai 37" evidence="2">
    <location>
        <begin position="3108"/>
        <end position="3163"/>
    </location>
</feature>
<feature type="domain" description="Olduvai 38" evidence="2">
    <location>
        <begin position="3164"/>
        <end position="3256"/>
    </location>
</feature>
<feature type="domain" description="Olduvai 39" evidence="2">
    <location>
        <begin position="3257"/>
        <end position="3349"/>
    </location>
</feature>
<feature type="domain" description="Olduvai 40" evidence="2">
    <location>
        <begin position="3352"/>
        <end position="3407"/>
    </location>
</feature>
<feature type="domain" description="Olduvai 41" evidence="2">
    <location>
        <begin position="3408"/>
        <end position="3500"/>
    </location>
</feature>
<feature type="domain" description="Olduvai 42" evidence="2">
    <location>
        <begin position="3501"/>
        <end position="3593"/>
    </location>
</feature>
<feature type="domain" description="Olduvai 43" evidence="2">
    <location>
        <begin position="3596"/>
        <end position="3651"/>
    </location>
</feature>
<feature type="domain" description="Olduvai 44" evidence="2">
    <location>
        <begin position="3652"/>
        <end position="3744"/>
    </location>
</feature>
<feature type="domain" description="Olduvai 45" evidence="2">
    <location>
        <begin position="3745"/>
        <end position="3843"/>
    </location>
</feature>
<feature type="region of interest" description="Disordered" evidence="3">
    <location>
        <begin position="180"/>
        <end position="203"/>
    </location>
</feature>
<feature type="region of interest" description="Disordered" evidence="3">
    <location>
        <begin position="249"/>
        <end position="295"/>
    </location>
</feature>
<feature type="region of interest" description="Disordered" evidence="3">
    <location>
        <begin position="559"/>
        <end position="597"/>
    </location>
</feature>
<feature type="region of interest" description="Disordered" evidence="3">
    <location>
        <begin position="803"/>
        <end position="841"/>
    </location>
</feature>
<feature type="region of interest" description="Disordered" evidence="3">
    <location>
        <begin position="1047"/>
        <end position="1085"/>
    </location>
</feature>
<feature type="region of interest" description="Disordered" evidence="3">
    <location>
        <begin position="1291"/>
        <end position="1329"/>
    </location>
</feature>
<feature type="region of interest" description="Disordered" evidence="3">
    <location>
        <begin position="1535"/>
        <end position="1573"/>
    </location>
</feature>
<feature type="region of interest" description="Disordered" evidence="3">
    <location>
        <begin position="1779"/>
        <end position="1817"/>
    </location>
</feature>
<feature type="region of interest" description="Disordered" evidence="3">
    <location>
        <begin position="2023"/>
        <end position="2061"/>
    </location>
</feature>
<feature type="region of interest" description="Disordered" evidence="3">
    <location>
        <begin position="2267"/>
        <end position="2305"/>
    </location>
</feature>
<feature type="region of interest" description="Disordered" evidence="3">
    <location>
        <begin position="2511"/>
        <end position="2549"/>
    </location>
</feature>
<feature type="region of interest" description="Disordered" evidence="3">
    <location>
        <begin position="2755"/>
        <end position="2793"/>
    </location>
</feature>
<feature type="region of interest" description="Disordered" evidence="3">
    <location>
        <begin position="2999"/>
        <end position="3037"/>
    </location>
</feature>
<feature type="region of interest" description="Disordered" evidence="3">
    <location>
        <begin position="3243"/>
        <end position="3281"/>
    </location>
</feature>
<feature type="region of interest" description="Disordered" evidence="3">
    <location>
        <begin position="3487"/>
        <end position="3525"/>
    </location>
</feature>
<feature type="region of interest" description="Disordered" evidence="3">
    <location>
        <begin position="3731"/>
        <end position="3764"/>
    </location>
</feature>
<feature type="coiled-coil region" evidence="1">
    <location>
        <begin position="70"/>
        <end position="130"/>
    </location>
</feature>
<feature type="compositionally biased region" description="Acidic residues" evidence="3">
    <location>
        <begin position="259"/>
        <end position="268"/>
    </location>
</feature>
<feature type="compositionally biased region" description="Acidic residues" evidence="3">
    <location>
        <begin position="279"/>
        <end position="291"/>
    </location>
</feature>
<feature type="compositionally biased region" description="Basic residues" evidence="3">
    <location>
        <begin position="560"/>
        <end position="578"/>
    </location>
</feature>
<feature type="compositionally biased region" description="Basic residues" evidence="3">
    <location>
        <begin position="804"/>
        <end position="822"/>
    </location>
</feature>
<feature type="compositionally biased region" description="Basic residues" evidence="3">
    <location>
        <begin position="1048"/>
        <end position="1066"/>
    </location>
</feature>
<feature type="compositionally biased region" description="Basic residues" evidence="3">
    <location>
        <begin position="1292"/>
        <end position="1310"/>
    </location>
</feature>
<feature type="compositionally biased region" description="Basic residues" evidence="3">
    <location>
        <begin position="1536"/>
        <end position="1554"/>
    </location>
</feature>
<feature type="compositionally biased region" description="Basic residues" evidence="3">
    <location>
        <begin position="1780"/>
        <end position="1798"/>
    </location>
</feature>
<feature type="compositionally biased region" description="Basic residues" evidence="3">
    <location>
        <begin position="2024"/>
        <end position="2042"/>
    </location>
</feature>
<feature type="compositionally biased region" description="Basic residues" evidence="3">
    <location>
        <begin position="2268"/>
        <end position="2286"/>
    </location>
</feature>
<feature type="compositionally biased region" description="Basic residues" evidence="3">
    <location>
        <begin position="2512"/>
        <end position="2530"/>
    </location>
</feature>
<feature type="compositionally biased region" description="Basic residues" evidence="3">
    <location>
        <begin position="2756"/>
        <end position="2774"/>
    </location>
</feature>
<feature type="compositionally biased region" description="Basic residues" evidence="3">
    <location>
        <begin position="3000"/>
        <end position="3018"/>
    </location>
</feature>
<feature type="compositionally biased region" description="Basic residues" evidence="3">
    <location>
        <begin position="3244"/>
        <end position="3262"/>
    </location>
</feature>
<feature type="compositionally biased region" description="Basic residues" evidence="3">
    <location>
        <begin position="3488"/>
        <end position="3506"/>
    </location>
</feature>
<feature type="compositionally biased region" description="Basic residues" evidence="3">
    <location>
        <begin position="3732"/>
        <end position="3750"/>
    </location>
</feature>
<protein>
    <recommendedName>
        <fullName evidence="4">NBPF family member NBPF19</fullName>
    </recommendedName>
    <alternativeName>
        <fullName evidence="5">Neuroblastoma breakpoint family member 19</fullName>
    </alternativeName>
</protein>
<organism>
    <name type="scientific">Homo sapiens</name>
    <name type="common">Human</name>
    <dbReference type="NCBI Taxonomy" id="9606"/>
    <lineage>
        <taxon>Eukaryota</taxon>
        <taxon>Metazoa</taxon>
        <taxon>Chordata</taxon>
        <taxon>Craniata</taxon>
        <taxon>Vertebrata</taxon>
        <taxon>Euteleostomi</taxon>
        <taxon>Mammalia</taxon>
        <taxon>Eutheria</taxon>
        <taxon>Euarchontoglires</taxon>
        <taxon>Primates</taxon>
        <taxon>Haplorrhini</taxon>
        <taxon>Catarrhini</taxon>
        <taxon>Hominidae</taxon>
        <taxon>Homo</taxon>
    </lineage>
</organism>
<evidence type="ECO:0000255" key="1"/>
<evidence type="ECO:0000255" key="2">
    <source>
        <dbReference type="PROSITE-ProRule" id="PRU00647"/>
    </source>
</evidence>
<evidence type="ECO:0000256" key="3">
    <source>
        <dbReference type="SAM" id="MobiDB-lite"/>
    </source>
</evidence>
<evidence type="ECO:0000305" key="4"/>
<evidence type="ECO:0000312" key="5">
    <source>
        <dbReference type="HGNC" id="HGNC:31999"/>
    </source>
</evidence>
<accession>A0A087WUL8</accession>
<keyword id="KW-0175">Coiled coil</keyword>
<keyword id="KW-0963">Cytoplasm</keyword>
<keyword id="KW-1185">Reference proteome</keyword>
<keyword id="KW-0677">Repeat</keyword>
<name>NBPFJ_HUMAN</name>
<proteinExistence type="inferred from homology"/>